<evidence type="ECO:0000255" key="1">
    <source>
        <dbReference type="HAMAP-Rule" id="MF_01395"/>
    </source>
</evidence>
<evidence type="ECO:0000255" key="2">
    <source>
        <dbReference type="PROSITE-ProRule" id="PRU01136"/>
    </source>
</evidence>
<protein>
    <recommendedName>
        <fullName evidence="1">Acetyl-coenzyme A carboxylase carboxyl transferase subunit beta</fullName>
        <shortName evidence="1">ACCase subunit beta</shortName>
        <shortName evidence="1">Acetyl-CoA carboxylase carboxyltransferase subunit beta</shortName>
        <ecNumber evidence="1">2.1.3.15</ecNumber>
    </recommendedName>
</protein>
<proteinExistence type="inferred from homology"/>
<sequence length="288" mass="31802">MALFQKKKYIKINPNRSIIEKQAEQPEVPDELFAKCPACKHTIYQKDLGKNKVCPNCDYNFRITAKERLAIVADKDSFIEMFTGIESKNPLDFPGYPEKLAATKARTGLDEAVMTGTATIKGQKTALAIMDSTFIMASMGTVVGEKLTRLFEYATTEKLPIIVFTASGGARMQEGIMSLMQMAKTSAAVKRHSNAGLFYITVLTDPTTGGVTASFASLGDIILAEPQSLIGFAGRRVIEQTVRQTLPDDFQKAEFLLNHGFVDAIVKRTELRQKLALLLELHTEVENV</sequence>
<accession>A2RM23</accession>
<reference key="1">
    <citation type="journal article" date="2007" name="J. Bacteriol.">
        <title>The complete genome sequence of the lactic acid bacterial paradigm Lactococcus lactis subsp. cremoris MG1363.</title>
        <authorList>
            <person name="Wegmann U."/>
            <person name="O'Connell-Motherway M."/>
            <person name="Zomer A."/>
            <person name="Buist G."/>
            <person name="Shearman C."/>
            <person name="Canchaya C."/>
            <person name="Ventura M."/>
            <person name="Goesmann A."/>
            <person name="Gasson M.J."/>
            <person name="Kuipers O.P."/>
            <person name="van Sinderen D."/>
            <person name="Kok J."/>
        </authorList>
    </citation>
    <scope>NUCLEOTIDE SEQUENCE [LARGE SCALE GENOMIC DNA]</scope>
    <source>
        <strain>MG1363</strain>
    </source>
</reference>
<gene>
    <name evidence="1" type="primary">accD</name>
    <name type="ordered locus">llmg_1778</name>
</gene>
<feature type="chain" id="PRO_0000389775" description="Acetyl-coenzyme A carboxylase carboxyl transferase subunit beta">
    <location>
        <begin position="1"/>
        <end position="288"/>
    </location>
</feature>
<feature type="domain" description="CoA carboxyltransferase N-terminal" evidence="2">
    <location>
        <begin position="32"/>
        <end position="288"/>
    </location>
</feature>
<feature type="zinc finger region" description="C4-type" evidence="1">
    <location>
        <begin position="36"/>
        <end position="57"/>
    </location>
</feature>
<feature type="binding site" evidence="1">
    <location>
        <position position="36"/>
    </location>
    <ligand>
        <name>Zn(2+)</name>
        <dbReference type="ChEBI" id="CHEBI:29105"/>
    </ligand>
</feature>
<feature type="binding site" evidence="1">
    <location>
        <position position="39"/>
    </location>
    <ligand>
        <name>Zn(2+)</name>
        <dbReference type="ChEBI" id="CHEBI:29105"/>
    </ligand>
</feature>
<feature type="binding site" evidence="1">
    <location>
        <position position="54"/>
    </location>
    <ligand>
        <name>Zn(2+)</name>
        <dbReference type="ChEBI" id="CHEBI:29105"/>
    </ligand>
</feature>
<feature type="binding site" evidence="1">
    <location>
        <position position="57"/>
    </location>
    <ligand>
        <name>Zn(2+)</name>
        <dbReference type="ChEBI" id="CHEBI:29105"/>
    </ligand>
</feature>
<organism>
    <name type="scientific">Lactococcus lactis subsp. cremoris (strain MG1363)</name>
    <dbReference type="NCBI Taxonomy" id="416870"/>
    <lineage>
        <taxon>Bacteria</taxon>
        <taxon>Bacillati</taxon>
        <taxon>Bacillota</taxon>
        <taxon>Bacilli</taxon>
        <taxon>Lactobacillales</taxon>
        <taxon>Streptococcaceae</taxon>
        <taxon>Lactococcus</taxon>
        <taxon>Lactococcus cremoris subsp. cremoris</taxon>
    </lineage>
</organism>
<dbReference type="EC" id="2.1.3.15" evidence="1"/>
<dbReference type="EMBL" id="AM406671">
    <property type="protein sequence ID" value="CAL98350.1"/>
    <property type="molecule type" value="Genomic_DNA"/>
</dbReference>
<dbReference type="RefSeq" id="WP_011835561.1">
    <property type="nucleotide sequence ID" value="NC_009004.1"/>
</dbReference>
<dbReference type="SMR" id="A2RM23"/>
<dbReference type="STRING" id="416870.llmg_1778"/>
<dbReference type="KEGG" id="llm:llmg_1778"/>
<dbReference type="eggNOG" id="COG0777">
    <property type="taxonomic scope" value="Bacteria"/>
</dbReference>
<dbReference type="HOGENOM" id="CLU_015486_1_1_9"/>
<dbReference type="OrthoDB" id="9772975at2"/>
<dbReference type="PhylomeDB" id="A2RM23"/>
<dbReference type="UniPathway" id="UPA00655">
    <property type="reaction ID" value="UER00711"/>
</dbReference>
<dbReference type="Proteomes" id="UP000000364">
    <property type="component" value="Chromosome"/>
</dbReference>
<dbReference type="GO" id="GO:0009317">
    <property type="term" value="C:acetyl-CoA carboxylase complex"/>
    <property type="evidence" value="ECO:0007669"/>
    <property type="project" value="InterPro"/>
</dbReference>
<dbReference type="GO" id="GO:0003989">
    <property type="term" value="F:acetyl-CoA carboxylase activity"/>
    <property type="evidence" value="ECO:0007669"/>
    <property type="project" value="InterPro"/>
</dbReference>
<dbReference type="GO" id="GO:0005524">
    <property type="term" value="F:ATP binding"/>
    <property type="evidence" value="ECO:0007669"/>
    <property type="project" value="UniProtKB-KW"/>
</dbReference>
<dbReference type="GO" id="GO:0016743">
    <property type="term" value="F:carboxyl- or carbamoyltransferase activity"/>
    <property type="evidence" value="ECO:0007669"/>
    <property type="project" value="UniProtKB-UniRule"/>
</dbReference>
<dbReference type="GO" id="GO:0008270">
    <property type="term" value="F:zinc ion binding"/>
    <property type="evidence" value="ECO:0007669"/>
    <property type="project" value="UniProtKB-UniRule"/>
</dbReference>
<dbReference type="GO" id="GO:0006633">
    <property type="term" value="P:fatty acid biosynthetic process"/>
    <property type="evidence" value="ECO:0007669"/>
    <property type="project" value="UniProtKB-KW"/>
</dbReference>
<dbReference type="GO" id="GO:2001295">
    <property type="term" value="P:malonyl-CoA biosynthetic process"/>
    <property type="evidence" value="ECO:0007669"/>
    <property type="project" value="UniProtKB-UniRule"/>
</dbReference>
<dbReference type="Gene3D" id="3.90.226.10">
    <property type="entry name" value="2-enoyl-CoA Hydratase, Chain A, domain 1"/>
    <property type="match status" value="1"/>
</dbReference>
<dbReference type="HAMAP" id="MF_01395">
    <property type="entry name" value="AcetylCoA_CT_beta"/>
    <property type="match status" value="1"/>
</dbReference>
<dbReference type="InterPro" id="IPR034733">
    <property type="entry name" value="AcCoA_carboxyl_beta"/>
</dbReference>
<dbReference type="InterPro" id="IPR000438">
    <property type="entry name" value="Acetyl_CoA_COase_Trfase_b_su"/>
</dbReference>
<dbReference type="InterPro" id="IPR029045">
    <property type="entry name" value="ClpP/crotonase-like_dom_sf"/>
</dbReference>
<dbReference type="InterPro" id="IPR011762">
    <property type="entry name" value="COA_CT_N"/>
</dbReference>
<dbReference type="InterPro" id="IPR041010">
    <property type="entry name" value="Znf-ACC"/>
</dbReference>
<dbReference type="NCBIfam" id="TIGR00515">
    <property type="entry name" value="accD"/>
    <property type="match status" value="1"/>
</dbReference>
<dbReference type="PANTHER" id="PTHR42995">
    <property type="entry name" value="ACETYL-COENZYME A CARBOXYLASE CARBOXYL TRANSFERASE SUBUNIT BETA, CHLOROPLASTIC"/>
    <property type="match status" value="1"/>
</dbReference>
<dbReference type="PANTHER" id="PTHR42995:SF5">
    <property type="entry name" value="ACETYL-COENZYME A CARBOXYLASE CARBOXYL TRANSFERASE SUBUNIT BETA, CHLOROPLASTIC"/>
    <property type="match status" value="1"/>
</dbReference>
<dbReference type="Pfam" id="PF01039">
    <property type="entry name" value="Carboxyl_trans"/>
    <property type="match status" value="1"/>
</dbReference>
<dbReference type="Pfam" id="PF17848">
    <property type="entry name" value="Zn_ribbon_ACC"/>
    <property type="match status" value="1"/>
</dbReference>
<dbReference type="PRINTS" id="PR01070">
    <property type="entry name" value="ACCCTRFRASEB"/>
</dbReference>
<dbReference type="SUPFAM" id="SSF52096">
    <property type="entry name" value="ClpP/crotonase"/>
    <property type="match status" value="1"/>
</dbReference>
<dbReference type="PROSITE" id="PS50980">
    <property type="entry name" value="COA_CT_NTER"/>
    <property type="match status" value="1"/>
</dbReference>
<name>ACCD_LACLM</name>
<keyword id="KW-0067">ATP-binding</keyword>
<keyword id="KW-0963">Cytoplasm</keyword>
<keyword id="KW-0275">Fatty acid biosynthesis</keyword>
<keyword id="KW-0276">Fatty acid metabolism</keyword>
<keyword id="KW-0444">Lipid biosynthesis</keyword>
<keyword id="KW-0443">Lipid metabolism</keyword>
<keyword id="KW-0479">Metal-binding</keyword>
<keyword id="KW-0547">Nucleotide-binding</keyword>
<keyword id="KW-0808">Transferase</keyword>
<keyword id="KW-0862">Zinc</keyword>
<keyword id="KW-0863">Zinc-finger</keyword>
<comment type="function">
    <text evidence="1">Component of the acetyl coenzyme A carboxylase (ACC) complex. Biotin carboxylase (BC) catalyzes the carboxylation of biotin on its carrier protein (BCCP) and then the CO(2) group is transferred by the transcarboxylase to acetyl-CoA to form malonyl-CoA.</text>
</comment>
<comment type="catalytic activity">
    <reaction evidence="1">
        <text>N(6)-carboxybiotinyl-L-lysyl-[protein] + acetyl-CoA = N(6)-biotinyl-L-lysyl-[protein] + malonyl-CoA</text>
        <dbReference type="Rhea" id="RHEA:54728"/>
        <dbReference type="Rhea" id="RHEA-COMP:10505"/>
        <dbReference type="Rhea" id="RHEA-COMP:10506"/>
        <dbReference type="ChEBI" id="CHEBI:57288"/>
        <dbReference type="ChEBI" id="CHEBI:57384"/>
        <dbReference type="ChEBI" id="CHEBI:83144"/>
        <dbReference type="ChEBI" id="CHEBI:83145"/>
        <dbReference type="EC" id="2.1.3.15"/>
    </reaction>
</comment>
<comment type="cofactor">
    <cofactor evidence="1">
        <name>Zn(2+)</name>
        <dbReference type="ChEBI" id="CHEBI:29105"/>
    </cofactor>
    <text evidence="1">Binds 1 zinc ion per subunit.</text>
</comment>
<comment type="pathway">
    <text evidence="1">Lipid metabolism; malonyl-CoA biosynthesis; malonyl-CoA from acetyl-CoA: step 1/1.</text>
</comment>
<comment type="subunit">
    <text evidence="1">Acetyl-CoA carboxylase is a heterohexamer composed of biotin carboxyl carrier protein (AccB), biotin carboxylase (AccC) and two subunits each of ACCase subunit alpha (AccA) and ACCase subunit beta (AccD).</text>
</comment>
<comment type="subcellular location">
    <subcellularLocation>
        <location evidence="1">Cytoplasm</location>
    </subcellularLocation>
</comment>
<comment type="similarity">
    <text evidence="1">Belongs to the AccD/PCCB family.</text>
</comment>